<organism>
    <name type="scientific">Streptococcus pyogenes serotype M3 (strain ATCC BAA-595 / MGAS315)</name>
    <dbReference type="NCBI Taxonomy" id="198466"/>
    <lineage>
        <taxon>Bacteria</taxon>
        <taxon>Bacillati</taxon>
        <taxon>Bacillota</taxon>
        <taxon>Bacilli</taxon>
        <taxon>Lactobacillales</taxon>
        <taxon>Streptococcaceae</taxon>
        <taxon>Streptococcus</taxon>
    </lineage>
</organism>
<protein>
    <recommendedName>
        <fullName evidence="1">Large ribosomal subunit protein bL20</fullName>
    </recommendedName>
    <alternativeName>
        <fullName evidence="2">50S ribosomal protein L20</fullName>
    </alternativeName>
</protein>
<gene>
    <name evidence="1" type="primary">rplT</name>
    <name type="synonym">rl20</name>
    <name type="ordered locus">SpyM3_0540</name>
</gene>
<keyword id="KW-0687">Ribonucleoprotein</keyword>
<keyword id="KW-0689">Ribosomal protein</keyword>
<keyword id="KW-0694">RNA-binding</keyword>
<keyword id="KW-0699">rRNA-binding</keyword>
<dbReference type="EMBL" id="AE014074">
    <property type="protein sequence ID" value="AAM79147.1"/>
    <property type="molecule type" value="Genomic_DNA"/>
</dbReference>
<dbReference type="RefSeq" id="WP_002985149.1">
    <property type="nucleotide sequence ID" value="NC_004070.1"/>
</dbReference>
<dbReference type="SMR" id="P0DE18"/>
<dbReference type="GeneID" id="69901075"/>
<dbReference type="KEGG" id="spg:SpyM3_0540"/>
<dbReference type="HOGENOM" id="CLU_123265_0_1_9"/>
<dbReference type="Proteomes" id="UP000000564">
    <property type="component" value="Chromosome"/>
</dbReference>
<dbReference type="GO" id="GO:1990904">
    <property type="term" value="C:ribonucleoprotein complex"/>
    <property type="evidence" value="ECO:0007669"/>
    <property type="project" value="UniProtKB-KW"/>
</dbReference>
<dbReference type="GO" id="GO:0005840">
    <property type="term" value="C:ribosome"/>
    <property type="evidence" value="ECO:0007669"/>
    <property type="project" value="UniProtKB-KW"/>
</dbReference>
<dbReference type="GO" id="GO:0019843">
    <property type="term" value="F:rRNA binding"/>
    <property type="evidence" value="ECO:0007669"/>
    <property type="project" value="UniProtKB-UniRule"/>
</dbReference>
<dbReference type="GO" id="GO:0003735">
    <property type="term" value="F:structural constituent of ribosome"/>
    <property type="evidence" value="ECO:0007669"/>
    <property type="project" value="InterPro"/>
</dbReference>
<dbReference type="GO" id="GO:0000027">
    <property type="term" value="P:ribosomal large subunit assembly"/>
    <property type="evidence" value="ECO:0007669"/>
    <property type="project" value="UniProtKB-UniRule"/>
</dbReference>
<dbReference type="GO" id="GO:0006412">
    <property type="term" value="P:translation"/>
    <property type="evidence" value="ECO:0007669"/>
    <property type="project" value="InterPro"/>
</dbReference>
<dbReference type="CDD" id="cd07026">
    <property type="entry name" value="Ribosomal_L20"/>
    <property type="match status" value="1"/>
</dbReference>
<dbReference type="FunFam" id="1.10.1900.20:FF:000001">
    <property type="entry name" value="50S ribosomal protein L20"/>
    <property type="match status" value="1"/>
</dbReference>
<dbReference type="Gene3D" id="6.10.160.10">
    <property type="match status" value="1"/>
</dbReference>
<dbReference type="Gene3D" id="1.10.1900.20">
    <property type="entry name" value="Ribosomal protein L20"/>
    <property type="match status" value="1"/>
</dbReference>
<dbReference type="HAMAP" id="MF_00382">
    <property type="entry name" value="Ribosomal_bL20"/>
    <property type="match status" value="1"/>
</dbReference>
<dbReference type="InterPro" id="IPR005813">
    <property type="entry name" value="Ribosomal_bL20"/>
</dbReference>
<dbReference type="InterPro" id="IPR049946">
    <property type="entry name" value="RIBOSOMAL_L20_CS"/>
</dbReference>
<dbReference type="InterPro" id="IPR035566">
    <property type="entry name" value="Ribosomal_protein_bL20_C"/>
</dbReference>
<dbReference type="NCBIfam" id="TIGR01032">
    <property type="entry name" value="rplT_bact"/>
    <property type="match status" value="1"/>
</dbReference>
<dbReference type="PANTHER" id="PTHR10986">
    <property type="entry name" value="39S RIBOSOMAL PROTEIN L20"/>
    <property type="match status" value="1"/>
</dbReference>
<dbReference type="Pfam" id="PF00453">
    <property type="entry name" value="Ribosomal_L20"/>
    <property type="match status" value="1"/>
</dbReference>
<dbReference type="PRINTS" id="PR00062">
    <property type="entry name" value="RIBOSOMALL20"/>
</dbReference>
<dbReference type="SUPFAM" id="SSF74731">
    <property type="entry name" value="Ribosomal protein L20"/>
    <property type="match status" value="1"/>
</dbReference>
<dbReference type="PROSITE" id="PS00937">
    <property type="entry name" value="RIBOSOMAL_L20"/>
    <property type="match status" value="1"/>
</dbReference>
<reference key="1">
    <citation type="journal article" date="2002" name="Proc. Natl. Acad. Sci. U.S.A.">
        <title>Genome sequence of a serotype M3 strain of group A Streptococcus: phage-encoded toxins, the high-virulence phenotype, and clone emergence.</title>
        <authorList>
            <person name="Beres S.B."/>
            <person name="Sylva G.L."/>
            <person name="Barbian K.D."/>
            <person name="Lei B."/>
            <person name="Hoff J.S."/>
            <person name="Mammarella N.D."/>
            <person name="Liu M.-Y."/>
            <person name="Smoot J.C."/>
            <person name="Porcella S.F."/>
            <person name="Parkins L.D."/>
            <person name="Campbell D.S."/>
            <person name="Smith T.M."/>
            <person name="McCormick J.K."/>
            <person name="Leung D.Y.M."/>
            <person name="Schlievert P.M."/>
            <person name="Musser J.M."/>
        </authorList>
    </citation>
    <scope>NUCLEOTIDE SEQUENCE [LARGE SCALE GENOMIC DNA]</scope>
    <source>
        <strain>ATCC BAA-595 / MGAS315</strain>
    </source>
</reference>
<sequence length="119" mass="13622">MARVKGGVVSRKRRKRILKLAKGYYGAKHILFRTAKEQVMNSYYYAYRDRRQKKRDFRKLWITRINAAARMNGLSYSQLMHGLKLAEIEVNRKMLADLAVADAAAFTALADAAKAKLGK</sequence>
<comment type="function">
    <text evidence="1">Binds directly to 23S ribosomal RNA and is necessary for the in vitro assembly process of the 50S ribosomal subunit. It is not involved in the protein synthesizing functions of that subunit.</text>
</comment>
<comment type="similarity">
    <text evidence="1">Belongs to the bacterial ribosomal protein bL20 family.</text>
</comment>
<proteinExistence type="inferred from homology"/>
<accession>P0DE18</accession>
<accession>P66115</accession>
<accession>Q9A0E8</accession>
<evidence type="ECO:0000255" key="1">
    <source>
        <dbReference type="HAMAP-Rule" id="MF_00382"/>
    </source>
</evidence>
<evidence type="ECO:0000305" key="2"/>
<feature type="chain" id="PRO_0000177241" description="Large ribosomal subunit protein bL20">
    <location>
        <begin position="1"/>
        <end position="119"/>
    </location>
</feature>
<name>RL20_STRP3</name>